<comment type="function">
    <text evidence="1">Centriole-enriched microtubule-binding protein involved in centriole biogenesis. In collaboration with CEP295 and POC1B, is required for the centriole-to-centrosome conversion by ensuring the formation of bona fide centriole wall. Functions as a linker component that maintains centrosome cohesion. Associates with CROCC and regulates its stability and localization to the centrosome.</text>
</comment>
<comment type="subunit">
    <text evidence="1">Interacts with CROCC. Interacts with POC1B; the interaction is direct and recruits POC1B to centriolar microtubules. Binds to centriolar microtubules.</text>
</comment>
<comment type="subcellular location">
    <subcellularLocation>
        <location evidence="1">Cytoplasm</location>
        <location evidence="1">Cytoskeleton</location>
        <location evidence="1">Microtubule organizing center</location>
        <location evidence="1">Centrosome</location>
    </subcellularLocation>
    <subcellularLocation>
        <location evidence="1">Cytoplasm</location>
        <location evidence="1">Cytoskeleton</location>
        <location evidence="1">Microtubule organizing center</location>
        <location evidence="1">Centrosome</location>
        <location evidence="1">Centriole</location>
    </subcellularLocation>
    <subcellularLocation>
        <location evidence="1">Cytoplasm</location>
        <location evidence="1">Cytoskeleton</location>
        <location evidence="1">Spindle pole</location>
    </subcellularLocation>
    <subcellularLocation>
        <location evidence="1">Midbody</location>
    </subcellularLocation>
    <text evidence="1">Localizes to the proximal end of mother and daughter centrioles.</text>
</comment>
<evidence type="ECO:0000250" key="1">
    <source>
        <dbReference type="UniProtKB" id="Q9C0F1"/>
    </source>
</evidence>
<evidence type="ECO:0000255" key="2"/>
<evidence type="ECO:0000256" key="3">
    <source>
        <dbReference type="SAM" id="MobiDB-lite"/>
    </source>
</evidence>
<organism>
    <name type="scientific">Macaca fascicularis</name>
    <name type="common">Crab-eating macaque</name>
    <name type="synonym">Cynomolgus monkey</name>
    <dbReference type="NCBI Taxonomy" id="9541"/>
    <lineage>
        <taxon>Eukaryota</taxon>
        <taxon>Metazoa</taxon>
        <taxon>Chordata</taxon>
        <taxon>Craniata</taxon>
        <taxon>Vertebrata</taxon>
        <taxon>Euteleostomi</taxon>
        <taxon>Mammalia</taxon>
        <taxon>Eutheria</taxon>
        <taxon>Euarchontoglires</taxon>
        <taxon>Primates</taxon>
        <taxon>Haplorrhini</taxon>
        <taxon>Catarrhini</taxon>
        <taxon>Cercopithecidae</taxon>
        <taxon>Cercopithecinae</taxon>
        <taxon>Macaca</taxon>
    </lineage>
</organism>
<proteinExistence type="evidence at transcript level"/>
<reference key="1">
    <citation type="submission" date="2005-06" db="EMBL/GenBank/DDBJ databases">
        <title>DNA sequences of macaque genes expressed in brain or testis and its evolutionary implications.</title>
        <authorList>
            <consortium name="International consortium for macaque cDNA sequencing and analysis"/>
        </authorList>
    </citation>
    <scope>NUCLEOTIDE SEQUENCE [LARGE SCALE MRNA]</scope>
    <source>
        <tissue>Testis</tissue>
    </source>
</reference>
<gene>
    <name type="primary">CEP44</name>
    <name type="ORF">QtsA-15204</name>
</gene>
<keyword id="KW-0175">Coiled coil</keyword>
<keyword id="KW-0963">Cytoplasm</keyword>
<keyword id="KW-0206">Cytoskeleton</keyword>
<keyword id="KW-0597">Phosphoprotein</keyword>
<keyword id="KW-1185">Reference proteome</keyword>
<dbReference type="EMBL" id="AB168838">
    <property type="protein sequence ID" value="BAE00942.1"/>
    <property type="molecule type" value="mRNA"/>
</dbReference>
<dbReference type="RefSeq" id="NP_001271681.1">
    <property type="nucleotide sequence ID" value="NM_001284752.1"/>
</dbReference>
<dbReference type="RefSeq" id="XP_005556374.3">
    <property type="nucleotide sequence ID" value="XM_005556317.4"/>
</dbReference>
<dbReference type="RefSeq" id="XP_065401758.1">
    <property type="nucleotide sequence ID" value="XM_065545686.1"/>
</dbReference>
<dbReference type="RefSeq" id="XP_065401759.1">
    <property type="nucleotide sequence ID" value="XM_065545687.1"/>
</dbReference>
<dbReference type="RefSeq" id="XP_065401760.1">
    <property type="nucleotide sequence ID" value="XM_065545688.1"/>
</dbReference>
<dbReference type="RefSeq" id="XP_065401761.1">
    <property type="nucleotide sequence ID" value="XM_065545689.1"/>
</dbReference>
<dbReference type="RefSeq" id="XP_065401762.1">
    <property type="nucleotide sequence ID" value="XM_065545690.1"/>
</dbReference>
<dbReference type="RefSeq" id="XP_065401763.1">
    <property type="nucleotide sequence ID" value="XM_065545691.1"/>
</dbReference>
<dbReference type="RefSeq" id="XP_065401764.1">
    <property type="nucleotide sequence ID" value="XM_065545692.1"/>
</dbReference>
<dbReference type="RefSeq" id="XP_065401765.1">
    <property type="nucleotide sequence ID" value="XM_065545693.1"/>
</dbReference>
<dbReference type="RefSeq" id="XP_065401766.1">
    <property type="nucleotide sequence ID" value="XM_065545694.1"/>
</dbReference>
<dbReference type="SMR" id="Q4R7I0"/>
<dbReference type="STRING" id="9541.ENSMFAP00000033920"/>
<dbReference type="GeneID" id="101865133"/>
<dbReference type="KEGG" id="mcf:101865133"/>
<dbReference type="CTD" id="80817"/>
<dbReference type="eggNOG" id="ENOG502R3RQ">
    <property type="taxonomic scope" value="Eukaryota"/>
</dbReference>
<dbReference type="Proteomes" id="UP000233100">
    <property type="component" value="Unplaced"/>
</dbReference>
<dbReference type="GO" id="GO:0005814">
    <property type="term" value="C:centriole"/>
    <property type="evidence" value="ECO:0000250"/>
    <property type="project" value="UniProtKB"/>
</dbReference>
<dbReference type="GO" id="GO:0005813">
    <property type="term" value="C:centrosome"/>
    <property type="evidence" value="ECO:0000250"/>
    <property type="project" value="UniProtKB"/>
</dbReference>
<dbReference type="GO" id="GO:0005737">
    <property type="term" value="C:cytoplasm"/>
    <property type="evidence" value="ECO:0007669"/>
    <property type="project" value="UniProtKB-KW"/>
</dbReference>
<dbReference type="GO" id="GO:0030496">
    <property type="term" value="C:midbody"/>
    <property type="evidence" value="ECO:0007669"/>
    <property type="project" value="UniProtKB-SubCell"/>
</dbReference>
<dbReference type="GO" id="GO:0000922">
    <property type="term" value="C:spindle pole"/>
    <property type="evidence" value="ECO:0000250"/>
    <property type="project" value="UniProtKB"/>
</dbReference>
<dbReference type="GO" id="GO:0008017">
    <property type="term" value="F:microtubule binding"/>
    <property type="evidence" value="ECO:0000250"/>
    <property type="project" value="UniProtKB"/>
</dbReference>
<dbReference type="GO" id="GO:0007099">
    <property type="term" value="P:centriole replication"/>
    <property type="evidence" value="ECO:0000250"/>
    <property type="project" value="UniProtKB"/>
</dbReference>
<dbReference type="GO" id="GO:0010457">
    <property type="term" value="P:centriole-centriole cohesion"/>
    <property type="evidence" value="ECO:0000250"/>
    <property type="project" value="UniProtKB"/>
</dbReference>
<dbReference type="GO" id="GO:0007098">
    <property type="term" value="P:centrosome cycle"/>
    <property type="evidence" value="ECO:0000250"/>
    <property type="project" value="UniProtKB"/>
</dbReference>
<dbReference type="InterPro" id="IPR033603">
    <property type="entry name" value="CEP44"/>
</dbReference>
<dbReference type="InterPro" id="IPR029157">
    <property type="entry name" value="CEP44_CC"/>
</dbReference>
<dbReference type="PANTHER" id="PTHR31477">
    <property type="entry name" value="CENTROSOMAL PROTEIN OF 44 KDA"/>
    <property type="match status" value="1"/>
</dbReference>
<dbReference type="PANTHER" id="PTHR31477:SF1">
    <property type="entry name" value="CENTROSOMAL PROTEIN OF 44 KDA"/>
    <property type="match status" value="1"/>
</dbReference>
<dbReference type="Pfam" id="PF15007">
    <property type="entry name" value="CEP44"/>
    <property type="match status" value="1"/>
</dbReference>
<feature type="chain" id="PRO_0000293723" description="Centrosomal protein of 44 kDa">
    <location>
        <begin position="1"/>
        <end position="390"/>
    </location>
</feature>
<feature type="region of interest" description="Binds with microtubules and centrioles" evidence="1">
    <location>
        <begin position="11"/>
        <end position="195"/>
    </location>
</feature>
<feature type="region of interest" description="Disordered" evidence="3">
    <location>
        <begin position="323"/>
        <end position="347"/>
    </location>
</feature>
<feature type="coiled-coil region" evidence="2">
    <location>
        <begin position="233"/>
        <end position="267"/>
    </location>
</feature>
<feature type="coiled-coil region" evidence="2">
    <location>
        <begin position="361"/>
        <end position="385"/>
    </location>
</feature>
<feature type="compositionally biased region" description="Low complexity" evidence="3">
    <location>
        <begin position="335"/>
        <end position="345"/>
    </location>
</feature>
<feature type="modified residue" description="Phosphoserine" evidence="1">
    <location>
        <position position="331"/>
    </location>
</feature>
<feature type="modified residue" description="Phosphoserine" evidence="1">
    <location>
        <position position="345"/>
    </location>
</feature>
<feature type="modified residue" description="Phosphothreonine" evidence="1">
    <location>
        <position position="346"/>
    </location>
</feature>
<sequence>MATGDLKRSLRNLEQVLRLLNYPEEVDCVGLIKGDPAASLPIISYSFTSYSPYVTELIMESNVELIAKNDLRFIDAVYKLLRDQFNYKPILTKKQFIQCGFAEWKIQIVCDILNCVMKKHKELSSLQKIPSQQRKKISSGKSEPSLSNEKISAEAVGVDTSGRFVTSGKKKAVVIRHLYNEDNVEISEDTLSPITGVNEAVDVSDLNATEIKMPEVKVPEIKAEQQDINVNPEITALQTMLAECQEKLKELTLIEKRLDCLEQKMKGNVMVDENTWTNLLSRVTLLETEMLLSKKNDEYVEFNEINEDCASCSNMDLLNPHRKNKVGRPASIPLSSRYSTASSDSTPRASTINYCGLNEISEETTIQKMERMKKMFEETAELLKCPNHYL</sequence>
<protein>
    <recommendedName>
        <fullName>Centrosomal protein of 44 kDa</fullName>
        <shortName>Cep44</shortName>
    </recommendedName>
</protein>
<name>CEP44_MACFA</name>
<accession>Q4R7I0</accession>